<proteinExistence type="inferred from homology"/>
<keyword id="KW-0235">DNA replication</keyword>
<keyword id="KW-0238">DNA-binding</keyword>
<keyword id="KW-0239">DNA-directed DNA polymerase</keyword>
<keyword id="KW-0269">Exonuclease</keyword>
<keyword id="KW-0378">Hydrolase</keyword>
<keyword id="KW-0540">Nuclease</keyword>
<keyword id="KW-0548">Nucleotidyltransferase</keyword>
<keyword id="KW-0808">Transferase</keyword>
<keyword id="KW-1194">Viral DNA replication</keyword>
<feature type="chain" id="PRO_0000101266" description="DNA polymerase">
    <location>
        <begin position="1"/>
        <end position="648"/>
    </location>
</feature>
<gene>
    <name type="primary">L</name>
</gene>
<reference key="1">
    <citation type="journal article" date="1984" name="J. Virol.">
        <title>Nucleotide sequence of the temperate Bacillus subtilis bacteriophage SPO2 DNA polymerase gene L.</title>
        <authorList>
            <person name="Raden B."/>
            <person name="Rutberg L."/>
        </authorList>
    </citation>
    <scope>NUCLEOTIDE SEQUENCE [GENOMIC DNA]</scope>
</reference>
<reference key="2">
    <citation type="journal article" date="1989" name="Cell">
        <title>A conserved 3'-&gt;5' exonuclease active site in prokaryotic and eukaryotic DNA polymerases.</title>
        <authorList>
            <person name="Bernad A."/>
            <person name="Blanco L."/>
            <person name="Lazaro J.M."/>
            <person name="Martin G."/>
            <person name="Salas M."/>
        </authorList>
    </citation>
    <scope>FUNCTION</scope>
</reference>
<organismHost>
    <name type="scientific">Bacillus subtilis</name>
    <dbReference type="NCBI Taxonomy" id="1423"/>
</organismHost>
<accession>P06225</accession>
<dbReference type="EC" id="2.7.7.7"/>
<dbReference type="EC" id="3.1.11.-" evidence="1"/>
<dbReference type="EMBL" id="X01458">
    <property type="protein sequence ID" value="CAA25691.1"/>
    <property type="molecule type" value="Genomic_DNA"/>
</dbReference>
<dbReference type="EMBL" id="K02752">
    <property type="protein sequence ID" value="AAA32600.1"/>
    <property type="molecule type" value="Genomic_DNA"/>
</dbReference>
<dbReference type="PIR" id="A21498">
    <property type="entry name" value="DJBPS2"/>
</dbReference>
<dbReference type="SMR" id="P06225"/>
<dbReference type="GO" id="GO:0003677">
    <property type="term" value="F:DNA binding"/>
    <property type="evidence" value="ECO:0007669"/>
    <property type="project" value="UniProtKB-KW"/>
</dbReference>
<dbReference type="GO" id="GO:0003887">
    <property type="term" value="F:DNA-directed DNA polymerase activity"/>
    <property type="evidence" value="ECO:0007669"/>
    <property type="project" value="UniProtKB-KW"/>
</dbReference>
<dbReference type="GO" id="GO:0004527">
    <property type="term" value="F:exonuclease activity"/>
    <property type="evidence" value="ECO:0007669"/>
    <property type="project" value="UniProtKB-KW"/>
</dbReference>
<dbReference type="GO" id="GO:0006261">
    <property type="term" value="P:DNA-templated DNA replication"/>
    <property type="evidence" value="ECO:0007669"/>
    <property type="project" value="InterPro"/>
</dbReference>
<dbReference type="GO" id="GO:0006302">
    <property type="term" value="P:double-strand break repair"/>
    <property type="evidence" value="ECO:0007669"/>
    <property type="project" value="TreeGrafter"/>
</dbReference>
<dbReference type="GO" id="GO:0039693">
    <property type="term" value="P:viral DNA genome replication"/>
    <property type="evidence" value="ECO:0007669"/>
    <property type="project" value="UniProtKB-KW"/>
</dbReference>
<dbReference type="CDD" id="cd08642">
    <property type="entry name" value="DNA_pol_A_pol_I_A"/>
    <property type="match status" value="1"/>
</dbReference>
<dbReference type="Gene3D" id="3.30.70.370">
    <property type="match status" value="1"/>
</dbReference>
<dbReference type="Gene3D" id="1.10.150.20">
    <property type="entry name" value="5' to 3' exonuclease, C-terminal subdomain"/>
    <property type="match status" value="1"/>
</dbReference>
<dbReference type="InterPro" id="IPR019760">
    <property type="entry name" value="DNA-dir_DNA_pol_A_CS"/>
</dbReference>
<dbReference type="InterPro" id="IPR001098">
    <property type="entry name" value="DNA-dir_DNA_pol_A_palm_dom"/>
</dbReference>
<dbReference type="InterPro" id="IPR043502">
    <property type="entry name" value="DNA/RNA_pol_sf"/>
</dbReference>
<dbReference type="InterPro" id="IPR002298">
    <property type="entry name" value="DNA_polymerase_A"/>
</dbReference>
<dbReference type="PANTHER" id="PTHR10133">
    <property type="entry name" value="DNA POLYMERASE I"/>
    <property type="match status" value="1"/>
</dbReference>
<dbReference type="PANTHER" id="PTHR10133:SF27">
    <property type="entry name" value="DNA POLYMERASE NU"/>
    <property type="match status" value="1"/>
</dbReference>
<dbReference type="Pfam" id="PF00476">
    <property type="entry name" value="DNA_pol_A"/>
    <property type="match status" value="1"/>
</dbReference>
<dbReference type="SMART" id="SM00482">
    <property type="entry name" value="POLAc"/>
    <property type="match status" value="1"/>
</dbReference>
<dbReference type="SUPFAM" id="SSF56672">
    <property type="entry name" value="DNA/RNA polymerases"/>
    <property type="match status" value="1"/>
</dbReference>
<dbReference type="PROSITE" id="PS00447">
    <property type="entry name" value="DNA_POLYMERASE_A"/>
    <property type="match status" value="1"/>
</dbReference>
<name>DPOL_BPSP2</name>
<sequence length="648" mass="72580">MKTLSIDIETFSSVDLLKAGVYAYTEAPDFEILLFAYAFDDDPVKIIDLAQGDTLPHEVLVALTSSKVIKTAYNANFERTCIAKHFNLMLLPAQWRCTAVHATTLGLPGNLDGVAKALKLSAQKDKAGKALIRYFSVPCKPTKANGQRVRNLPEHDPEKWEKFKVYCIQDVEVERAIKNRISKFEPLESEHKLWALDQEINDRGVRIDVDLVKHAIACDEQYQAGLIAEAKKLTGLPNPNSTAQLKKWLEEKGLTISSLAKDKIEELIENTNDETVHRVLRLRQEMAKTSVKKYLAMEKALCPDNRVRGLLQFYGASRTGRWAGRLVQVQNLPQNKIEDLDTARNLLKGGHYEAIELLYGQVPFVLSQLVRTAFIPSEGNEFYVSDFSAIEARVIAWLAGEEWRLEVFNTHGKIYEASAAQMFKVPVESITKGSPLRQKGKVAELALGYQGGKGALIQMGALNMGLAEGELPELVKAWRTANKKIVKFWYDVEAAAIKAVKERKPVKLQHGLTFLYESGILFVQLPSGRRLAYAKPKLELDERFGKEALTYEGKLESGKWGRLNTYGGKLVENIVQATARDCLAITLMRLDNAGYKTVMHVHDEAVLDVPRGKNELDKVEAIMGEPISWAKGLPLTADGFVTDYYKKD</sequence>
<organism>
    <name type="scientific">Bacillus phage SP02</name>
    <name type="common">Bacteriophage SP02</name>
    <dbReference type="NCBI Taxonomy" id="10723"/>
    <lineage>
        <taxon>Viruses</taxon>
        <taxon>Duplodnaviria</taxon>
        <taxon>Heunggongvirae</taxon>
        <taxon>Uroviricota</taxon>
        <taxon>Caudoviricetes</taxon>
        <taxon>Lambdavirus</taxon>
    </lineage>
</organism>
<evidence type="ECO:0000269" key="1">
    <source>
    </source>
</evidence>
<evidence type="ECO:0000305" key="2"/>
<protein>
    <recommendedName>
        <fullName>DNA polymerase</fullName>
        <ecNumber>2.7.7.7</ecNumber>
        <ecNumber evidence="1">3.1.11.-</ecNumber>
    </recommendedName>
</protein>
<comment type="function">
    <text evidence="1">Replicates the viral genomic DNA. This polymerase possesses two enzymatic activities: DNA synthesis (polymerase) and an exonucleolytic activity that degrades single-stranded DNA in the 3'-5' direction.</text>
</comment>
<comment type="catalytic activity">
    <reaction>
        <text>DNA(n) + a 2'-deoxyribonucleoside 5'-triphosphate = DNA(n+1) + diphosphate</text>
        <dbReference type="Rhea" id="RHEA:22508"/>
        <dbReference type="Rhea" id="RHEA-COMP:17339"/>
        <dbReference type="Rhea" id="RHEA-COMP:17340"/>
        <dbReference type="ChEBI" id="CHEBI:33019"/>
        <dbReference type="ChEBI" id="CHEBI:61560"/>
        <dbReference type="ChEBI" id="CHEBI:173112"/>
        <dbReference type="EC" id="2.7.7.7"/>
    </reaction>
</comment>
<comment type="similarity">
    <text evidence="2">Belongs to the DNA polymerase type-A family.</text>
</comment>